<protein>
    <recommendedName>
        <fullName evidence="1">L-fuculose phosphate aldolase</fullName>
        <ecNumber evidence="1">4.1.2.17</ecNumber>
    </recommendedName>
    <alternativeName>
        <fullName evidence="1">L-fuculose-1-phosphate aldolase</fullName>
    </alternativeName>
</protein>
<sequence length="215" mass="23757">MERNKLARQIIDTCLEMTRLGLNQGTAGNVSVRYQDGMLITPTGIPYEKLTESHIVFIDGNGKHEEGKLPSSEWRFHMAAYQSRPDANAVVHNHAVHCTAVSILNRPIPAIHYMIAAAGGNSIPCAPYATFGTRELSEHVALALKNRKATLLQHHGLIACEANLEKALWLAHEVEVLAQLYLTTLAITDPVPVLSDEEIAVVLEKFKTYGLRIEE</sequence>
<keyword id="KW-0054">Arabinose catabolism</keyword>
<keyword id="KW-0119">Carbohydrate metabolism</keyword>
<keyword id="KW-0294">Fucose metabolism</keyword>
<keyword id="KW-0456">Lyase</keyword>
<keyword id="KW-0479">Metal-binding</keyword>
<keyword id="KW-1185">Reference proteome</keyword>
<keyword id="KW-0862">Zinc</keyword>
<proteinExistence type="inferred from homology"/>
<gene>
    <name evidence="1" type="primary">fucA</name>
    <name type="ordered locus">c3368</name>
</gene>
<reference key="1">
    <citation type="journal article" date="2002" name="Proc. Natl. Acad. Sci. U.S.A.">
        <title>Extensive mosaic structure revealed by the complete genome sequence of uropathogenic Escherichia coli.</title>
        <authorList>
            <person name="Welch R.A."/>
            <person name="Burland V."/>
            <person name="Plunkett G. III"/>
            <person name="Redford P."/>
            <person name="Roesch P."/>
            <person name="Rasko D."/>
            <person name="Buckles E.L."/>
            <person name="Liou S.-R."/>
            <person name="Boutin A."/>
            <person name="Hackett J."/>
            <person name="Stroud D."/>
            <person name="Mayhew G.F."/>
            <person name="Rose D.J."/>
            <person name="Zhou S."/>
            <person name="Schwartz D.C."/>
            <person name="Perna N.T."/>
            <person name="Mobley H.L.T."/>
            <person name="Donnenberg M.S."/>
            <person name="Blattner F.R."/>
        </authorList>
    </citation>
    <scope>NUCLEOTIDE SEQUENCE [LARGE SCALE GENOMIC DNA]</scope>
    <source>
        <strain>CFT073 / ATCC 700928 / UPEC</strain>
    </source>
</reference>
<evidence type="ECO:0000255" key="1">
    <source>
        <dbReference type="HAMAP-Rule" id="MF_00987"/>
    </source>
</evidence>
<name>FUCA_ECOL6</name>
<feature type="chain" id="PRO_0000162927" description="L-fuculose phosphate aldolase">
    <location>
        <begin position="1"/>
        <end position="215"/>
    </location>
</feature>
<feature type="active site" description="Proton donor/acceptor" evidence="1">
    <location>
        <position position="73"/>
    </location>
</feature>
<feature type="binding site" evidence="1">
    <location>
        <begin position="28"/>
        <end position="29"/>
    </location>
    <ligand>
        <name>substrate</name>
    </ligand>
</feature>
<feature type="binding site" evidence="1">
    <location>
        <begin position="43"/>
        <end position="44"/>
    </location>
    <ligand>
        <name>substrate</name>
    </ligand>
</feature>
<feature type="binding site" evidence="1">
    <location>
        <begin position="71"/>
        <end position="72"/>
    </location>
    <ligand>
        <name>substrate</name>
    </ligand>
</feature>
<feature type="binding site" evidence="1">
    <location>
        <position position="73"/>
    </location>
    <ligand>
        <name>Zn(2+)</name>
        <dbReference type="ChEBI" id="CHEBI:29105"/>
        <note>catalytic</note>
    </ligand>
</feature>
<feature type="binding site" evidence="1">
    <location>
        <position position="92"/>
    </location>
    <ligand>
        <name>Zn(2+)</name>
        <dbReference type="ChEBI" id="CHEBI:29105"/>
        <note>catalytic</note>
    </ligand>
</feature>
<feature type="binding site" evidence="1">
    <location>
        <position position="94"/>
    </location>
    <ligand>
        <name>Zn(2+)</name>
        <dbReference type="ChEBI" id="CHEBI:29105"/>
        <note>catalytic</note>
    </ligand>
</feature>
<feature type="binding site" evidence="1">
    <location>
        <position position="155"/>
    </location>
    <ligand>
        <name>Zn(2+)</name>
        <dbReference type="ChEBI" id="CHEBI:29105"/>
        <note>catalytic</note>
    </ligand>
</feature>
<feature type="site" description="Plays a key role in the stabilization of the transition state and positioning the aldehyde component" evidence="1">
    <location>
        <position position="113"/>
    </location>
</feature>
<feature type="site" description="Plays a key role in the stabilization of the transition state and positioning the aldehyde component" evidence="1">
    <location>
        <position position="131"/>
    </location>
</feature>
<feature type="site" description="Plays a key role in the stabilization of the transition state and positioning the aldehyde component" evidence="1">
    <location>
        <position position="209"/>
    </location>
</feature>
<accession>Q8FEF0</accession>
<dbReference type="EC" id="4.1.2.17" evidence="1"/>
<dbReference type="EMBL" id="AE014075">
    <property type="protein sequence ID" value="AAN81815.1"/>
    <property type="molecule type" value="Genomic_DNA"/>
</dbReference>
<dbReference type="RefSeq" id="WP_000440772.1">
    <property type="nucleotide sequence ID" value="NZ_CP051263.1"/>
</dbReference>
<dbReference type="SMR" id="Q8FEF0"/>
<dbReference type="STRING" id="199310.c3368"/>
<dbReference type="KEGG" id="ecc:c3368"/>
<dbReference type="eggNOG" id="COG0235">
    <property type="taxonomic scope" value="Bacteria"/>
</dbReference>
<dbReference type="HOGENOM" id="CLU_006033_3_0_6"/>
<dbReference type="BioCyc" id="ECOL199310:C3368-MONOMER"/>
<dbReference type="UniPathway" id="UPA00563">
    <property type="reaction ID" value="UER00626"/>
</dbReference>
<dbReference type="Proteomes" id="UP000001410">
    <property type="component" value="Chromosome"/>
</dbReference>
<dbReference type="GO" id="GO:0005829">
    <property type="term" value="C:cytosol"/>
    <property type="evidence" value="ECO:0007669"/>
    <property type="project" value="TreeGrafter"/>
</dbReference>
<dbReference type="GO" id="GO:0008738">
    <property type="term" value="F:L-fuculose-phosphate aldolase activity"/>
    <property type="evidence" value="ECO:0007669"/>
    <property type="project" value="UniProtKB-UniRule"/>
</dbReference>
<dbReference type="GO" id="GO:0008270">
    <property type="term" value="F:zinc ion binding"/>
    <property type="evidence" value="ECO:0007669"/>
    <property type="project" value="UniProtKB-UniRule"/>
</dbReference>
<dbReference type="GO" id="GO:0019568">
    <property type="term" value="P:arabinose catabolic process"/>
    <property type="evidence" value="ECO:0007669"/>
    <property type="project" value="UniProtKB-KW"/>
</dbReference>
<dbReference type="GO" id="GO:0042355">
    <property type="term" value="P:L-fucose catabolic process"/>
    <property type="evidence" value="ECO:0007669"/>
    <property type="project" value="UniProtKB-UniRule"/>
</dbReference>
<dbReference type="CDD" id="cd00398">
    <property type="entry name" value="Aldolase_II"/>
    <property type="match status" value="1"/>
</dbReference>
<dbReference type="FunFam" id="3.40.225.10:FF:000005">
    <property type="entry name" value="L-fuculose phosphate aldolase"/>
    <property type="match status" value="1"/>
</dbReference>
<dbReference type="Gene3D" id="3.40.225.10">
    <property type="entry name" value="Class II aldolase/adducin N-terminal domain"/>
    <property type="match status" value="1"/>
</dbReference>
<dbReference type="HAMAP" id="MF_00987">
    <property type="entry name" value="FucA"/>
    <property type="match status" value="1"/>
</dbReference>
<dbReference type="InterPro" id="IPR050197">
    <property type="entry name" value="Aldolase_class_II_sugar_metab"/>
</dbReference>
<dbReference type="InterPro" id="IPR001303">
    <property type="entry name" value="Aldolase_II/adducin_N"/>
</dbReference>
<dbReference type="InterPro" id="IPR036409">
    <property type="entry name" value="Aldolase_II/adducin_N_sf"/>
</dbReference>
<dbReference type="InterPro" id="IPR004782">
    <property type="entry name" value="FucA"/>
</dbReference>
<dbReference type="NCBIfam" id="TIGR01086">
    <property type="entry name" value="fucA"/>
    <property type="match status" value="1"/>
</dbReference>
<dbReference type="NCBIfam" id="NF005984">
    <property type="entry name" value="PRK08087.1"/>
    <property type="match status" value="1"/>
</dbReference>
<dbReference type="PANTHER" id="PTHR22789:SF0">
    <property type="entry name" value="3-OXO-TETRONATE 4-PHOSPHATE DECARBOXYLASE-RELATED"/>
    <property type="match status" value="1"/>
</dbReference>
<dbReference type="PANTHER" id="PTHR22789">
    <property type="entry name" value="FUCULOSE PHOSPHATE ALDOLASE"/>
    <property type="match status" value="1"/>
</dbReference>
<dbReference type="Pfam" id="PF00596">
    <property type="entry name" value="Aldolase_II"/>
    <property type="match status" value="1"/>
</dbReference>
<dbReference type="SMART" id="SM01007">
    <property type="entry name" value="Aldolase_II"/>
    <property type="match status" value="1"/>
</dbReference>
<dbReference type="SUPFAM" id="SSF53639">
    <property type="entry name" value="AraD/HMP-PK domain-like"/>
    <property type="match status" value="1"/>
</dbReference>
<comment type="function">
    <text evidence="1">Involved in the degradation of L-fucose and D-arabinose. Catalyzes the reversible cleavage of L-fuculose 1-phosphate (Fuc1P) to yield dihydroxyacetone phosphate (DHAP) and L-lactaldehyde.</text>
</comment>
<comment type="catalytic activity">
    <reaction evidence="1">
        <text>L-fuculose 1-phosphate = (S)-lactaldehyde + dihydroxyacetone phosphate</text>
        <dbReference type="Rhea" id="RHEA:12933"/>
        <dbReference type="ChEBI" id="CHEBI:18041"/>
        <dbReference type="ChEBI" id="CHEBI:57642"/>
        <dbReference type="ChEBI" id="CHEBI:57846"/>
        <dbReference type="EC" id="4.1.2.17"/>
    </reaction>
</comment>
<comment type="cofactor">
    <cofactor evidence="1">
        <name>Zn(2+)</name>
        <dbReference type="ChEBI" id="CHEBI:29105"/>
    </cofactor>
    <text evidence="1">Binds 1 zinc ion per subunit.</text>
</comment>
<comment type="pathway">
    <text evidence="1">Carbohydrate degradation; L-fucose degradation; L-lactaldehyde and glycerone phosphate from L-fucose: step 3/3.</text>
</comment>
<comment type="subunit">
    <text evidence="1">Homotetramer.</text>
</comment>
<comment type="similarity">
    <text evidence="1">Belongs to the aldolase class II family. AraD/FucA subfamily.</text>
</comment>
<organism>
    <name type="scientific">Escherichia coli O6:H1 (strain CFT073 / ATCC 700928 / UPEC)</name>
    <dbReference type="NCBI Taxonomy" id="199310"/>
    <lineage>
        <taxon>Bacteria</taxon>
        <taxon>Pseudomonadati</taxon>
        <taxon>Pseudomonadota</taxon>
        <taxon>Gammaproteobacteria</taxon>
        <taxon>Enterobacterales</taxon>
        <taxon>Enterobacteriaceae</taxon>
        <taxon>Escherichia</taxon>
    </lineage>
</organism>